<name>APOC1_RABIT</name>
<keyword id="KW-0903">Direct protein sequencing</keyword>
<keyword id="KW-0445">Lipid transport</keyword>
<keyword id="KW-1185">Reference proteome</keyword>
<keyword id="KW-0964">Secreted</keyword>
<keyword id="KW-0813">Transport</keyword>
<keyword id="KW-0850">VLDL</keyword>
<organism>
    <name type="scientific">Oryctolagus cuniculus</name>
    <name type="common">Rabbit</name>
    <dbReference type="NCBI Taxonomy" id="9986"/>
    <lineage>
        <taxon>Eukaryota</taxon>
        <taxon>Metazoa</taxon>
        <taxon>Chordata</taxon>
        <taxon>Craniata</taxon>
        <taxon>Vertebrata</taxon>
        <taxon>Euteleostomi</taxon>
        <taxon>Mammalia</taxon>
        <taxon>Eutheria</taxon>
        <taxon>Euarchontoglires</taxon>
        <taxon>Glires</taxon>
        <taxon>Lagomorpha</taxon>
        <taxon>Leporidae</taxon>
        <taxon>Oryctolagus</taxon>
    </lineage>
</organism>
<gene>
    <name type="primary">APOC1</name>
</gene>
<comment type="function">
    <text evidence="1 2">Inhibitor of lipoprotein binding to the low density lipoprotein (LDL) receptor, LDL receptor-related protein, and very low density lipoprotein (VLDL) receptor. Associates with high density lipoproteins (HDL) and the triacylglycerol-rich lipoproteins in the plasma and makes up about 10% of the protein of the VLDL and 2% of that of HDL. Appears to interfere directly with fatty acid uptake and is also the major plasma inhibitor of cholesteryl ester transfer protein (CETP). Binds free fatty acids and reduces their intracellular esterification (By similarity). Modulates the interaction of APOE with beta-migrating VLDL and inhibits binding of beta-VLDL to the LDL receptor-related protein.</text>
</comment>
<comment type="subcellular location">
    <subcellularLocation>
        <location evidence="1">Secreted</location>
    </subcellularLocation>
</comment>
<comment type="similarity">
    <text evidence="3">Belongs to the apolipoprotein C1 family.</text>
</comment>
<protein>
    <recommendedName>
        <fullName>Apolipoprotein C-I</fullName>
        <shortName>Apo-CI</shortName>
        <shortName>ApoC-I</shortName>
    </recommendedName>
    <alternativeName>
        <fullName>Apolipoprotein C1</fullName>
    </alternativeName>
</protein>
<sequence>APDFSTLELIPDKLKEFGNTLEEKARMA</sequence>
<dbReference type="PIR" id="A23691">
    <property type="entry name" value="A23691"/>
</dbReference>
<dbReference type="SMR" id="P33047"/>
<dbReference type="STRING" id="9986.ENSOCUP00000018618"/>
<dbReference type="PaxDb" id="9986-ENSOCUP00000018618"/>
<dbReference type="eggNOG" id="ENOG502SEU4">
    <property type="taxonomic scope" value="Eukaryota"/>
</dbReference>
<dbReference type="InParanoid" id="P33047"/>
<dbReference type="Proteomes" id="UP000001811">
    <property type="component" value="Unplaced"/>
</dbReference>
<dbReference type="GO" id="GO:0034361">
    <property type="term" value="C:very-low-density lipoprotein particle"/>
    <property type="evidence" value="ECO:0007669"/>
    <property type="project" value="UniProtKB-KW"/>
</dbReference>
<dbReference type="GO" id="GO:0006869">
    <property type="term" value="P:lipid transport"/>
    <property type="evidence" value="ECO:0007669"/>
    <property type="project" value="UniProtKB-KW"/>
</dbReference>
<dbReference type="GO" id="GO:0042157">
    <property type="term" value="P:lipoprotein metabolic process"/>
    <property type="evidence" value="ECO:0007669"/>
    <property type="project" value="InterPro"/>
</dbReference>
<dbReference type="Gene3D" id="4.10.260.30">
    <property type="entry name" value="Apolipoprotein C-I"/>
    <property type="match status" value="1"/>
</dbReference>
<dbReference type="InterPro" id="IPR043081">
    <property type="entry name" value="ApoC-1_sf"/>
</dbReference>
<dbReference type="InterPro" id="IPR006781">
    <property type="entry name" value="ApoC-I"/>
</dbReference>
<dbReference type="Pfam" id="PF04691">
    <property type="entry name" value="ApoC-I"/>
    <property type="match status" value="1"/>
</dbReference>
<accession>P33047</accession>
<reference key="1">
    <citation type="journal article" date="1990" name="J. Biol. Chem.">
        <title>Apolipoprotein C-I modulates the interaction of apolipoprotein E with beta-migrating very low density lipoproteins (beta-VLDL) and inhibits binding of beta-VLDL to low density lipoprotein receptor-related protein.</title>
        <authorList>
            <person name="Weisgraber K.H."/>
            <person name="Mahley R.W."/>
            <person name="Kowal R.C."/>
            <person name="Herz J."/>
            <person name="Goldstein J.L."/>
            <person name="Brown M.S."/>
        </authorList>
    </citation>
    <scope>PROTEIN SEQUENCE</scope>
    <scope>FUNCTION</scope>
</reference>
<proteinExistence type="evidence at protein level"/>
<feature type="chain" id="PRO_0000190978" description="Apolipoprotein C-I">
    <location>
        <begin position="1"/>
        <end position="28" status="greater than"/>
    </location>
</feature>
<feature type="non-terminal residue">
    <location>
        <position position="28"/>
    </location>
</feature>
<evidence type="ECO:0000250" key="1">
    <source>
        <dbReference type="UniProtKB" id="P02654"/>
    </source>
</evidence>
<evidence type="ECO:0000269" key="2">
    <source>
    </source>
</evidence>
<evidence type="ECO:0000305" key="3"/>